<gene>
    <name evidence="1" type="primary">dnaJ</name>
    <name type="ordered locus">LSEI_1563</name>
</gene>
<accession>Q038N5</accession>
<proteinExistence type="inferred from homology"/>
<evidence type="ECO:0000255" key="1">
    <source>
        <dbReference type="HAMAP-Rule" id="MF_01152"/>
    </source>
</evidence>
<sequence length="387" mass="41448">MADQKDYYETLGVSRDADDDTIRKAFRKLSKKYHPDLNHAPGAEQKFKDINEAYQVLSDPQKRAAYDQYGSADGPQGFGGAGAGQGGFSDFGGGQGGFGGFDDIFSQFFGGAGGGAQANPSAPRQGADLQYRMDLTFEEAIFGKDTKISYDREAVCHTCNGSGAKPGTSPVTCHKCHGSGYIQVQRNTAFGAMMTRQVCDVCGGTGKEIKEKCPTCHGTGHEQERHTIDVKVPAGVEDGQQMRLQQAGEAGTNGGPYGDLYIVFRVAPSKKYQRDGSEIYLTIPLSFAQAALGDEIKVDTVHGAVELKIPAGTQSQTKFRLRGKGAPRLRGNGTGDQIVTVEVQTPKHLNEKQKSALMQFAAASGEDVTPHNGTLFDRVKEAFKGGK</sequence>
<reference key="1">
    <citation type="journal article" date="2006" name="Proc. Natl. Acad. Sci. U.S.A.">
        <title>Comparative genomics of the lactic acid bacteria.</title>
        <authorList>
            <person name="Makarova K.S."/>
            <person name="Slesarev A."/>
            <person name="Wolf Y.I."/>
            <person name="Sorokin A."/>
            <person name="Mirkin B."/>
            <person name="Koonin E.V."/>
            <person name="Pavlov A."/>
            <person name="Pavlova N."/>
            <person name="Karamychev V."/>
            <person name="Polouchine N."/>
            <person name="Shakhova V."/>
            <person name="Grigoriev I."/>
            <person name="Lou Y."/>
            <person name="Rohksar D."/>
            <person name="Lucas S."/>
            <person name="Huang K."/>
            <person name="Goodstein D.M."/>
            <person name="Hawkins T."/>
            <person name="Plengvidhya V."/>
            <person name="Welker D."/>
            <person name="Hughes J."/>
            <person name="Goh Y."/>
            <person name="Benson A."/>
            <person name="Baldwin K."/>
            <person name="Lee J.-H."/>
            <person name="Diaz-Muniz I."/>
            <person name="Dosti B."/>
            <person name="Smeianov V."/>
            <person name="Wechter W."/>
            <person name="Barabote R."/>
            <person name="Lorca G."/>
            <person name="Altermann E."/>
            <person name="Barrangou R."/>
            <person name="Ganesan B."/>
            <person name="Xie Y."/>
            <person name="Rawsthorne H."/>
            <person name="Tamir D."/>
            <person name="Parker C."/>
            <person name="Breidt F."/>
            <person name="Broadbent J.R."/>
            <person name="Hutkins R."/>
            <person name="O'Sullivan D."/>
            <person name="Steele J."/>
            <person name="Unlu G."/>
            <person name="Saier M.H. Jr."/>
            <person name="Klaenhammer T."/>
            <person name="Richardson P."/>
            <person name="Kozyavkin S."/>
            <person name="Weimer B.C."/>
            <person name="Mills D.A."/>
        </authorList>
    </citation>
    <scope>NUCLEOTIDE SEQUENCE [LARGE SCALE GENOMIC DNA]</scope>
    <source>
        <strain>ATCC 334 / BCRC 17002 / CCUG 31169 / CIP 107868 / KCTC 3260 / NRRL B-441</strain>
    </source>
</reference>
<name>DNAJ_LACP3</name>
<keyword id="KW-0143">Chaperone</keyword>
<keyword id="KW-0963">Cytoplasm</keyword>
<keyword id="KW-0235">DNA replication</keyword>
<keyword id="KW-0479">Metal-binding</keyword>
<keyword id="KW-1185">Reference proteome</keyword>
<keyword id="KW-0677">Repeat</keyword>
<keyword id="KW-0346">Stress response</keyword>
<keyword id="KW-0862">Zinc</keyword>
<keyword id="KW-0863">Zinc-finger</keyword>
<comment type="function">
    <text evidence="1">Participates actively in the response to hyperosmotic and heat shock by preventing the aggregation of stress-denatured proteins and by disaggregating proteins, also in an autonomous, DnaK-independent fashion. Unfolded proteins bind initially to DnaJ; upon interaction with the DnaJ-bound protein, DnaK hydrolyzes its bound ATP, resulting in the formation of a stable complex. GrpE releases ADP from DnaK; ATP binding to DnaK triggers the release of the substrate protein, thus completing the reaction cycle. Several rounds of ATP-dependent interactions between DnaJ, DnaK and GrpE are required for fully efficient folding. Also involved, together with DnaK and GrpE, in the DNA replication of plasmids through activation of initiation proteins.</text>
</comment>
<comment type="cofactor">
    <cofactor evidence="1">
        <name>Zn(2+)</name>
        <dbReference type="ChEBI" id="CHEBI:29105"/>
    </cofactor>
    <text evidence="1">Binds 2 Zn(2+) ions per monomer.</text>
</comment>
<comment type="subunit">
    <text evidence="1">Homodimer.</text>
</comment>
<comment type="subcellular location">
    <subcellularLocation>
        <location evidence="1">Cytoplasm</location>
    </subcellularLocation>
</comment>
<comment type="domain">
    <text evidence="1">The J domain is necessary and sufficient to stimulate DnaK ATPase activity. Zinc center 1 plays an important role in the autonomous, DnaK-independent chaperone activity of DnaJ. Zinc center 2 is essential for interaction with DnaK and for DnaJ activity.</text>
</comment>
<comment type="similarity">
    <text evidence="1">Belongs to the DnaJ family.</text>
</comment>
<dbReference type="EMBL" id="CP000423">
    <property type="protein sequence ID" value="ABJ70337.1"/>
    <property type="molecule type" value="Genomic_DNA"/>
</dbReference>
<dbReference type="RefSeq" id="WP_003565745.1">
    <property type="nucleotide sequence ID" value="NC_008526.1"/>
</dbReference>
<dbReference type="RefSeq" id="YP_806779.1">
    <property type="nucleotide sequence ID" value="NC_008526.1"/>
</dbReference>
<dbReference type="SMR" id="Q038N5"/>
<dbReference type="STRING" id="321967.LSEI_1563"/>
<dbReference type="PaxDb" id="321967-LSEI_1563"/>
<dbReference type="GeneID" id="57090218"/>
<dbReference type="KEGG" id="lca:LSEI_1563"/>
<dbReference type="PATRIC" id="fig|321967.11.peg.1544"/>
<dbReference type="HOGENOM" id="CLU_017633_0_7_9"/>
<dbReference type="Proteomes" id="UP000001651">
    <property type="component" value="Chromosome"/>
</dbReference>
<dbReference type="GO" id="GO:0005737">
    <property type="term" value="C:cytoplasm"/>
    <property type="evidence" value="ECO:0007669"/>
    <property type="project" value="UniProtKB-SubCell"/>
</dbReference>
<dbReference type="GO" id="GO:0005524">
    <property type="term" value="F:ATP binding"/>
    <property type="evidence" value="ECO:0007669"/>
    <property type="project" value="InterPro"/>
</dbReference>
<dbReference type="GO" id="GO:0031072">
    <property type="term" value="F:heat shock protein binding"/>
    <property type="evidence" value="ECO:0007669"/>
    <property type="project" value="InterPro"/>
</dbReference>
<dbReference type="GO" id="GO:0051082">
    <property type="term" value="F:unfolded protein binding"/>
    <property type="evidence" value="ECO:0007669"/>
    <property type="project" value="UniProtKB-UniRule"/>
</dbReference>
<dbReference type="GO" id="GO:0008270">
    <property type="term" value="F:zinc ion binding"/>
    <property type="evidence" value="ECO:0007669"/>
    <property type="project" value="UniProtKB-UniRule"/>
</dbReference>
<dbReference type="GO" id="GO:0051085">
    <property type="term" value="P:chaperone cofactor-dependent protein refolding"/>
    <property type="evidence" value="ECO:0007669"/>
    <property type="project" value="TreeGrafter"/>
</dbReference>
<dbReference type="GO" id="GO:0006260">
    <property type="term" value="P:DNA replication"/>
    <property type="evidence" value="ECO:0007669"/>
    <property type="project" value="UniProtKB-KW"/>
</dbReference>
<dbReference type="GO" id="GO:0042026">
    <property type="term" value="P:protein refolding"/>
    <property type="evidence" value="ECO:0007669"/>
    <property type="project" value="TreeGrafter"/>
</dbReference>
<dbReference type="GO" id="GO:0009408">
    <property type="term" value="P:response to heat"/>
    <property type="evidence" value="ECO:0007669"/>
    <property type="project" value="InterPro"/>
</dbReference>
<dbReference type="CDD" id="cd06257">
    <property type="entry name" value="DnaJ"/>
    <property type="match status" value="1"/>
</dbReference>
<dbReference type="CDD" id="cd10747">
    <property type="entry name" value="DnaJ_C"/>
    <property type="match status" value="1"/>
</dbReference>
<dbReference type="CDD" id="cd10719">
    <property type="entry name" value="DnaJ_zf"/>
    <property type="match status" value="1"/>
</dbReference>
<dbReference type="FunFam" id="1.10.287.110:FF:000031">
    <property type="entry name" value="Molecular chaperone DnaJ"/>
    <property type="match status" value="1"/>
</dbReference>
<dbReference type="FunFam" id="2.10.230.10:FF:000002">
    <property type="entry name" value="Molecular chaperone DnaJ"/>
    <property type="match status" value="1"/>
</dbReference>
<dbReference type="FunFam" id="2.60.260.20:FF:000004">
    <property type="entry name" value="Molecular chaperone DnaJ"/>
    <property type="match status" value="1"/>
</dbReference>
<dbReference type="Gene3D" id="1.10.287.110">
    <property type="entry name" value="DnaJ domain"/>
    <property type="match status" value="1"/>
</dbReference>
<dbReference type="Gene3D" id="2.10.230.10">
    <property type="entry name" value="Heat shock protein DnaJ, cysteine-rich domain"/>
    <property type="match status" value="1"/>
</dbReference>
<dbReference type="Gene3D" id="2.60.260.20">
    <property type="entry name" value="Urease metallochaperone UreE, N-terminal domain"/>
    <property type="match status" value="2"/>
</dbReference>
<dbReference type="HAMAP" id="MF_01152">
    <property type="entry name" value="DnaJ"/>
    <property type="match status" value="1"/>
</dbReference>
<dbReference type="InterPro" id="IPR012724">
    <property type="entry name" value="DnaJ"/>
</dbReference>
<dbReference type="InterPro" id="IPR002939">
    <property type="entry name" value="DnaJ_C"/>
</dbReference>
<dbReference type="InterPro" id="IPR001623">
    <property type="entry name" value="DnaJ_domain"/>
</dbReference>
<dbReference type="InterPro" id="IPR018253">
    <property type="entry name" value="DnaJ_domain_CS"/>
</dbReference>
<dbReference type="InterPro" id="IPR008971">
    <property type="entry name" value="HSP40/DnaJ_pept-bd"/>
</dbReference>
<dbReference type="InterPro" id="IPR001305">
    <property type="entry name" value="HSP_DnaJ_Cys-rich_dom"/>
</dbReference>
<dbReference type="InterPro" id="IPR036410">
    <property type="entry name" value="HSP_DnaJ_Cys-rich_dom_sf"/>
</dbReference>
<dbReference type="InterPro" id="IPR036869">
    <property type="entry name" value="J_dom_sf"/>
</dbReference>
<dbReference type="NCBIfam" id="TIGR02349">
    <property type="entry name" value="DnaJ_bact"/>
    <property type="match status" value="1"/>
</dbReference>
<dbReference type="NCBIfam" id="NF008035">
    <property type="entry name" value="PRK10767.1"/>
    <property type="match status" value="1"/>
</dbReference>
<dbReference type="NCBIfam" id="NF010869">
    <property type="entry name" value="PRK14276.1"/>
    <property type="match status" value="1"/>
</dbReference>
<dbReference type="PANTHER" id="PTHR43096:SF48">
    <property type="entry name" value="CHAPERONE PROTEIN DNAJ"/>
    <property type="match status" value="1"/>
</dbReference>
<dbReference type="PANTHER" id="PTHR43096">
    <property type="entry name" value="DNAJ HOMOLOG 1, MITOCHONDRIAL-RELATED"/>
    <property type="match status" value="1"/>
</dbReference>
<dbReference type="Pfam" id="PF00226">
    <property type="entry name" value="DnaJ"/>
    <property type="match status" value="1"/>
</dbReference>
<dbReference type="Pfam" id="PF01556">
    <property type="entry name" value="DnaJ_C"/>
    <property type="match status" value="1"/>
</dbReference>
<dbReference type="Pfam" id="PF00684">
    <property type="entry name" value="DnaJ_CXXCXGXG"/>
    <property type="match status" value="1"/>
</dbReference>
<dbReference type="PRINTS" id="PR00625">
    <property type="entry name" value="JDOMAIN"/>
</dbReference>
<dbReference type="SMART" id="SM00271">
    <property type="entry name" value="DnaJ"/>
    <property type="match status" value="1"/>
</dbReference>
<dbReference type="SUPFAM" id="SSF46565">
    <property type="entry name" value="Chaperone J-domain"/>
    <property type="match status" value="1"/>
</dbReference>
<dbReference type="SUPFAM" id="SSF57938">
    <property type="entry name" value="DnaJ/Hsp40 cysteine-rich domain"/>
    <property type="match status" value="1"/>
</dbReference>
<dbReference type="SUPFAM" id="SSF49493">
    <property type="entry name" value="HSP40/DnaJ peptide-binding domain"/>
    <property type="match status" value="2"/>
</dbReference>
<dbReference type="PROSITE" id="PS00636">
    <property type="entry name" value="DNAJ_1"/>
    <property type="match status" value="1"/>
</dbReference>
<dbReference type="PROSITE" id="PS50076">
    <property type="entry name" value="DNAJ_2"/>
    <property type="match status" value="1"/>
</dbReference>
<dbReference type="PROSITE" id="PS51188">
    <property type="entry name" value="ZF_CR"/>
    <property type="match status" value="1"/>
</dbReference>
<feature type="chain" id="PRO_1000085213" description="Chaperone protein DnaJ">
    <location>
        <begin position="1"/>
        <end position="387"/>
    </location>
</feature>
<feature type="domain" description="J" evidence="1">
    <location>
        <begin position="6"/>
        <end position="70"/>
    </location>
</feature>
<feature type="repeat" description="CXXCXGXG motif">
    <location>
        <begin position="156"/>
        <end position="163"/>
    </location>
</feature>
<feature type="repeat" description="CXXCXGXG motif">
    <location>
        <begin position="173"/>
        <end position="180"/>
    </location>
</feature>
<feature type="repeat" description="CXXCXGXG motif">
    <location>
        <begin position="199"/>
        <end position="206"/>
    </location>
</feature>
<feature type="repeat" description="CXXCXGXG motif">
    <location>
        <begin position="213"/>
        <end position="220"/>
    </location>
</feature>
<feature type="zinc finger region" description="CR-type" evidence="1">
    <location>
        <begin position="143"/>
        <end position="225"/>
    </location>
</feature>
<feature type="binding site" evidence="1">
    <location>
        <position position="156"/>
    </location>
    <ligand>
        <name>Zn(2+)</name>
        <dbReference type="ChEBI" id="CHEBI:29105"/>
        <label>1</label>
    </ligand>
</feature>
<feature type="binding site" evidence="1">
    <location>
        <position position="159"/>
    </location>
    <ligand>
        <name>Zn(2+)</name>
        <dbReference type="ChEBI" id="CHEBI:29105"/>
        <label>1</label>
    </ligand>
</feature>
<feature type="binding site" evidence="1">
    <location>
        <position position="173"/>
    </location>
    <ligand>
        <name>Zn(2+)</name>
        <dbReference type="ChEBI" id="CHEBI:29105"/>
        <label>2</label>
    </ligand>
</feature>
<feature type="binding site" evidence="1">
    <location>
        <position position="176"/>
    </location>
    <ligand>
        <name>Zn(2+)</name>
        <dbReference type="ChEBI" id="CHEBI:29105"/>
        <label>2</label>
    </ligand>
</feature>
<feature type="binding site" evidence="1">
    <location>
        <position position="199"/>
    </location>
    <ligand>
        <name>Zn(2+)</name>
        <dbReference type="ChEBI" id="CHEBI:29105"/>
        <label>2</label>
    </ligand>
</feature>
<feature type="binding site" evidence="1">
    <location>
        <position position="202"/>
    </location>
    <ligand>
        <name>Zn(2+)</name>
        <dbReference type="ChEBI" id="CHEBI:29105"/>
        <label>2</label>
    </ligand>
</feature>
<feature type="binding site" evidence="1">
    <location>
        <position position="213"/>
    </location>
    <ligand>
        <name>Zn(2+)</name>
        <dbReference type="ChEBI" id="CHEBI:29105"/>
        <label>1</label>
    </ligand>
</feature>
<feature type="binding site" evidence="1">
    <location>
        <position position="216"/>
    </location>
    <ligand>
        <name>Zn(2+)</name>
        <dbReference type="ChEBI" id="CHEBI:29105"/>
        <label>1</label>
    </ligand>
</feature>
<organism>
    <name type="scientific">Lacticaseibacillus paracasei (strain ATCC 334 / BCRC 17002 / CCUG 31169 / CIP 107868 / KCTC 3260 / NRRL B-441)</name>
    <name type="common">Lactobacillus paracasei</name>
    <dbReference type="NCBI Taxonomy" id="321967"/>
    <lineage>
        <taxon>Bacteria</taxon>
        <taxon>Bacillati</taxon>
        <taxon>Bacillota</taxon>
        <taxon>Bacilli</taxon>
        <taxon>Lactobacillales</taxon>
        <taxon>Lactobacillaceae</taxon>
        <taxon>Lacticaseibacillus</taxon>
    </lineage>
</organism>
<protein>
    <recommendedName>
        <fullName evidence="1">Chaperone protein DnaJ</fullName>
    </recommendedName>
</protein>